<sequence>MSDRVHERSMGMEEEGSTKNMKTKVLELPTKIKKILKNIWKVGKDDPRRVKHALKVGVSLTLVSLLYLMEPLFKGIGNSAIWAVMTVVVVLEFSAGATLCKGLNRGLGTLIAGSLAFFIEFVANDSGKIFRAIFIGAAVFIIGALITYLRFIPYIKKNYDYGMLIFLLTFNLITVSSYRVDTVIKIAHERFYTIAMGVGICLLMSLLVFPIWSGEDLHKSTVAKLQGLSYSIEACVNEYFEEEEKDEETSDLSEDTIYNGYKTVLDSKSADEALAMYASWEPRHTRHCHRFPWKHYVKVGSVLRQFGYTVVALHGCLKTEIQTPRPLRGLFKDPCVRLAGEICKVLSELAASIRNRRHCSPEILSDSLQVALQDLNTAIKSQPKLFLGSSQNGNVSQGNSGRHNPNVAVSQHINKDTNEAASYQNTGTPRGERMSRFGPNVSFSRLRADTLERRSAAATNERKILRQQLSRIVVLTSLEFSEALPFAAFASLLVEMVARLDNVIEEVEELGTIACFKDYDNNVDQKDVEVRVEKPADLVVGVE</sequence>
<reference key="1">
    <citation type="submission" date="1999-06" db="EMBL/GenBank/DDBJ databases">
        <title>Structural analysis of Arabidopsis thaliana chromosome 5. XI.</title>
        <authorList>
            <person name="Kaneko T."/>
            <person name="Katoh T."/>
            <person name="Asamizu E."/>
            <person name="Sato S."/>
            <person name="Nakamura Y."/>
            <person name="Kotani H."/>
            <person name="Tabata S."/>
        </authorList>
    </citation>
    <scope>NUCLEOTIDE SEQUENCE [LARGE SCALE GENOMIC DNA]</scope>
    <source>
        <strain>cv. Columbia</strain>
    </source>
</reference>
<reference key="2">
    <citation type="journal article" date="2017" name="Plant J.">
        <title>Araport11: a complete reannotation of the Arabidopsis thaliana reference genome.</title>
        <authorList>
            <person name="Cheng C.Y."/>
            <person name="Krishnakumar V."/>
            <person name="Chan A.P."/>
            <person name="Thibaud-Nissen F."/>
            <person name="Schobel S."/>
            <person name="Town C.D."/>
        </authorList>
    </citation>
    <scope>GENOME REANNOTATION</scope>
    <source>
        <strain>cv. Columbia</strain>
    </source>
</reference>
<reference key="3">
    <citation type="submission" date="2005-05" db="EMBL/GenBank/DDBJ databases">
        <authorList>
            <person name="Underwood B.A."/>
            <person name="Xiao Y.-L."/>
            <person name="Moskal W.A. Jr."/>
            <person name="Monaghan E.L."/>
            <person name="Wang W."/>
            <person name="Redman J.C."/>
            <person name="Wu H.C."/>
            <person name="Utterback T."/>
            <person name="Town C.D."/>
        </authorList>
    </citation>
    <scope>NUCLEOTIDE SEQUENCE [LARGE SCALE MRNA] (ISOFORMS 1 AND 2)</scope>
    <source>
        <strain>cv. Columbia</strain>
    </source>
</reference>
<reference key="4">
    <citation type="journal article" date="2006" name="Proc. Natl. Acad. Sci. U.S.A.">
        <title>AtALMT1, which encodes a malate transporter, is identified as one of several genes critical for aluminum tolerance in Arabidopsis.</title>
        <authorList>
            <person name="Hoekenga O.A."/>
            <person name="Maron L.G."/>
            <person name="Pineros M.A."/>
            <person name="Cancado G.M."/>
            <person name="Shaff J."/>
            <person name="Kobayashi Y."/>
            <person name="Ryan P.R."/>
            <person name="Dong B."/>
            <person name="Delhaize E."/>
            <person name="Sasaki T."/>
            <person name="Matsumoto H."/>
            <person name="Yamamoto Y."/>
            <person name="Koyama H."/>
            <person name="Kochian L.V."/>
        </authorList>
    </citation>
    <scope>GENE FAMILY</scope>
    <scope>NOMENCLATURE</scope>
</reference>
<name>ALMTE_ARATH</name>
<proteinExistence type="evidence at transcript level"/>
<comment type="function">
    <text evidence="1">Malate transporter.</text>
</comment>
<comment type="subcellular location">
    <subcellularLocation>
        <location evidence="5">Membrane</location>
        <topology evidence="5">Multi-pass membrane protein</topology>
    </subcellularLocation>
</comment>
<comment type="alternative products">
    <event type="alternative splicing"/>
    <isoform>
        <id>Q9LS22-1</id>
        <name>1</name>
        <sequence type="displayed"/>
    </isoform>
    <isoform>
        <id>Q9LS22-2</id>
        <name>2</name>
        <sequence type="described" ref="VSP_040189"/>
    </isoform>
    <isoform>
        <id>Q9LS22-3</id>
        <name>3</name>
        <sequence type="described" ref="VSP_040190"/>
    </isoform>
</comment>
<comment type="similarity">
    <text evidence="5">Belongs to the aromatic acid exporter (TC 2.A.85) family.</text>
</comment>
<gene>
    <name type="primary">ALMT14</name>
    <name type="ordered locus">At5g46610</name>
    <name type="ORF">F10E10.9</name>
</gene>
<organism>
    <name type="scientific">Arabidopsis thaliana</name>
    <name type="common">Mouse-ear cress</name>
    <dbReference type="NCBI Taxonomy" id="3702"/>
    <lineage>
        <taxon>Eukaryota</taxon>
        <taxon>Viridiplantae</taxon>
        <taxon>Streptophyta</taxon>
        <taxon>Embryophyta</taxon>
        <taxon>Tracheophyta</taxon>
        <taxon>Spermatophyta</taxon>
        <taxon>Magnoliopsida</taxon>
        <taxon>eudicotyledons</taxon>
        <taxon>Gunneridae</taxon>
        <taxon>Pentapetalae</taxon>
        <taxon>rosids</taxon>
        <taxon>malvids</taxon>
        <taxon>Brassicales</taxon>
        <taxon>Brassicaceae</taxon>
        <taxon>Camelineae</taxon>
        <taxon>Arabidopsis</taxon>
    </lineage>
</organism>
<keyword id="KW-0025">Alternative splicing</keyword>
<keyword id="KW-0175">Coiled coil</keyword>
<keyword id="KW-0407">Ion channel</keyword>
<keyword id="KW-0406">Ion transport</keyword>
<keyword id="KW-0472">Membrane</keyword>
<keyword id="KW-1185">Reference proteome</keyword>
<keyword id="KW-0812">Transmembrane</keyword>
<keyword id="KW-1133">Transmembrane helix</keyword>
<keyword id="KW-0813">Transport</keyword>
<feature type="chain" id="PRO_0000401473" description="Aluminum-activated malate transporter 14">
    <location>
        <begin position="1"/>
        <end position="543"/>
    </location>
</feature>
<feature type="transmembrane region" description="Helical" evidence="2">
    <location>
        <begin position="56"/>
        <end position="76"/>
    </location>
</feature>
<feature type="transmembrane region" description="Helical" evidence="2">
    <location>
        <begin position="80"/>
        <end position="100"/>
    </location>
</feature>
<feature type="transmembrane region" description="Helical" evidence="2">
    <location>
        <begin position="106"/>
        <end position="126"/>
    </location>
</feature>
<feature type="transmembrane region" description="Helical" evidence="2">
    <location>
        <begin position="129"/>
        <end position="149"/>
    </location>
</feature>
<feature type="transmembrane region" description="Helical" evidence="2">
    <location>
        <begin position="164"/>
        <end position="184"/>
    </location>
</feature>
<feature type="transmembrane region" description="Helical" evidence="2">
    <location>
        <begin position="191"/>
        <end position="211"/>
    </location>
</feature>
<feature type="region of interest" description="Disordered" evidence="3">
    <location>
        <begin position="416"/>
        <end position="438"/>
    </location>
</feature>
<feature type="coiled-coil region" evidence="2">
    <location>
        <begin position="445"/>
        <end position="472"/>
    </location>
</feature>
<feature type="compositionally biased region" description="Polar residues" evidence="3">
    <location>
        <begin position="419"/>
        <end position="428"/>
    </location>
</feature>
<feature type="splice variant" id="VSP_040189" description="In isoform 2." evidence="4">
    <location>
        <begin position="96"/>
        <end position="119"/>
    </location>
</feature>
<feature type="splice variant" id="VSP_040190" description="In isoform 3." evidence="5">
    <location>
        <begin position="97"/>
        <end position="143"/>
    </location>
</feature>
<evidence type="ECO:0000250" key="1"/>
<evidence type="ECO:0000255" key="2"/>
<evidence type="ECO:0000256" key="3">
    <source>
        <dbReference type="SAM" id="MobiDB-lite"/>
    </source>
</evidence>
<evidence type="ECO:0000303" key="4">
    <source ref="3"/>
</evidence>
<evidence type="ECO:0000305" key="5"/>
<protein>
    <recommendedName>
        <fullName>Aluminum-activated malate transporter 14</fullName>
        <shortName>AtALMT14</shortName>
    </recommendedName>
</protein>
<dbReference type="EMBL" id="AB028605">
    <property type="protein sequence ID" value="BAA97532.1"/>
    <property type="molecule type" value="Genomic_DNA"/>
</dbReference>
<dbReference type="EMBL" id="CP002688">
    <property type="protein sequence ID" value="AED95403.1"/>
    <property type="molecule type" value="Genomic_DNA"/>
</dbReference>
<dbReference type="EMBL" id="CP002688">
    <property type="protein sequence ID" value="AED95404.1"/>
    <property type="molecule type" value="Genomic_DNA"/>
</dbReference>
<dbReference type="EMBL" id="CP002688">
    <property type="protein sequence ID" value="AED95405.1"/>
    <property type="molecule type" value="Genomic_DNA"/>
</dbReference>
<dbReference type="EMBL" id="AY735705">
    <property type="protein sequence ID" value="AAU44575.1"/>
    <property type="molecule type" value="mRNA"/>
</dbReference>
<dbReference type="EMBL" id="AY735706">
    <property type="protein sequence ID" value="AAU44576.1"/>
    <property type="molecule type" value="mRNA"/>
</dbReference>
<dbReference type="EMBL" id="DQ056708">
    <property type="protein sequence ID" value="AAY78854.1"/>
    <property type="molecule type" value="mRNA"/>
</dbReference>
<dbReference type="RefSeq" id="NP_001032019.1">
    <molecule id="Q9LS22-2"/>
    <property type="nucleotide sequence ID" value="NM_001036942.1"/>
</dbReference>
<dbReference type="RefSeq" id="NP_001119385.1">
    <molecule id="Q9LS22-3"/>
    <property type="nucleotide sequence ID" value="NM_001125913.1"/>
</dbReference>
<dbReference type="RefSeq" id="NP_199473.1">
    <molecule id="Q9LS22-1"/>
    <property type="nucleotide sequence ID" value="NM_124031.2"/>
</dbReference>
<dbReference type="SMR" id="Q9LS22"/>
<dbReference type="STRING" id="3702.Q9LS22"/>
<dbReference type="PaxDb" id="3702-AT5G46610.1"/>
<dbReference type="EnsemblPlants" id="AT5G46610.1">
    <molecule id="Q9LS22-1"/>
    <property type="protein sequence ID" value="AT5G46610.1"/>
    <property type="gene ID" value="AT5G46610"/>
</dbReference>
<dbReference type="EnsemblPlants" id="AT5G46610.2">
    <molecule id="Q9LS22-2"/>
    <property type="protein sequence ID" value="AT5G46610.2"/>
    <property type="gene ID" value="AT5G46610"/>
</dbReference>
<dbReference type="EnsemblPlants" id="AT5G46610.3">
    <molecule id="Q9LS22-3"/>
    <property type="protein sequence ID" value="AT5G46610.3"/>
    <property type="gene ID" value="AT5G46610"/>
</dbReference>
<dbReference type="GeneID" id="834704"/>
<dbReference type="Gramene" id="AT5G46610.1">
    <molecule id="Q9LS22-1"/>
    <property type="protein sequence ID" value="AT5G46610.1"/>
    <property type="gene ID" value="AT5G46610"/>
</dbReference>
<dbReference type="Gramene" id="AT5G46610.2">
    <molecule id="Q9LS22-2"/>
    <property type="protein sequence ID" value="AT5G46610.2"/>
    <property type="gene ID" value="AT5G46610"/>
</dbReference>
<dbReference type="Gramene" id="AT5G46610.3">
    <molecule id="Q9LS22-3"/>
    <property type="protein sequence ID" value="AT5G46610.3"/>
    <property type="gene ID" value="AT5G46610"/>
</dbReference>
<dbReference type="KEGG" id="ath:AT5G46610"/>
<dbReference type="Araport" id="AT5G46610"/>
<dbReference type="TAIR" id="AT5G46610"/>
<dbReference type="eggNOG" id="KOG4711">
    <property type="taxonomic scope" value="Eukaryota"/>
</dbReference>
<dbReference type="HOGENOM" id="CLU_020841_1_2_1"/>
<dbReference type="InParanoid" id="Q9LS22"/>
<dbReference type="OMA" id="MEMEDPI"/>
<dbReference type="PhylomeDB" id="Q9LS22"/>
<dbReference type="PRO" id="PR:Q9LS22"/>
<dbReference type="Proteomes" id="UP000006548">
    <property type="component" value="Chromosome 5"/>
</dbReference>
<dbReference type="ExpressionAtlas" id="Q9LS22">
    <property type="expression patterns" value="baseline and differential"/>
</dbReference>
<dbReference type="GO" id="GO:0016020">
    <property type="term" value="C:membrane"/>
    <property type="evidence" value="ECO:0007669"/>
    <property type="project" value="UniProtKB-SubCell"/>
</dbReference>
<dbReference type="GO" id="GO:0015743">
    <property type="term" value="P:malate transport"/>
    <property type="evidence" value="ECO:0007669"/>
    <property type="project" value="InterPro"/>
</dbReference>
<dbReference type="GO" id="GO:0034220">
    <property type="term" value="P:monoatomic ion transmembrane transport"/>
    <property type="evidence" value="ECO:0007669"/>
    <property type="project" value="UniProtKB-KW"/>
</dbReference>
<dbReference type="InterPro" id="IPR020966">
    <property type="entry name" value="ALMT"/>
</dbReference>
<dbReference type="PANTHER" id="PTHR31086">
    <property type="entry name" value="ALUMINUM-ACTIVATED MALATE TRANSPORTER 10"/>
    <property type="match status" value="1"/>
</dbReference>
<dbReference type="Pfam" id="PF11744">
    <property type="entry name" value="ALMT"/>
    <property type="match status" value="1"/>
</dbReference>
<accession>Q9LS22</accession>
<accession>B3H4Y1</accession>
<accession>Q5XV16</accession>
<accession>Q5XV17</accession>